<proteinExistence type="inferred from homology"/>
<feature type="chain" id="PRO_0000039182" description="Non-structural protein 1">
    <location>
        <begin position="1"/>
        <end position="241"/>
    </location>
</feature>
<feature type="non-terminal residue">
    <location>
        <position position="1"/>
    </location>
</feature>
<comment type="function">
    <text evidence="1">Suppresses the RNA silencing-based antiviral response in Drosophila cells.</text>
</comment>
<comment type="subcellular location">
    <subcellularLocation>
        <location evidence="1">Host cytoplasm</location>
    </subcellularLocation>
    <subcellularLocation>
        <location evidence="1">Host nucleus</location>
    </subcellularLocation>
</comment>
<comment type="alternative products">
    <event type="alternative splicing"/>
    <isoform>
        <id>P0C141-1</id>
        <name>NS1</name>
        <sequence type="displayed"/>
    </isoform>
    <isoform>
        <id>P0C142-1</id>
        <name>NEP</name>
        <name>NS2</name>
        <sequence type="external"/>
    </isoform>
</comment>
<comment type="sequence caution" evidence="2">
    <conflict type="frameshift">
        <sequence resource="EMBL-CDS" id="BAA24042"/>
    </conflict>
</comment>
<accession>P0C141</accession>
<accession>P06825</accession>
<accession>Q84095</accession>
<accession>Q84096</accession>
<evidence type="ECO:0000250" key="1"/>
<evidence type="ECO:0000305" key="2"/>
<keyword id="KW-0025">Alternative splicing</keyword>
<keyword id="KW-1035">Host cytoplasm</keyword>
<keyword id="KW-1048">Host nucleus</keyword>
<gene>
    <name type="primary">NS</name>
</gene>
<protein>
    <recommendedName>
        <fullName>Non-structural protein 1</fullName>
        <shortName>NS1</shortName>
    </recommendedName>
    <alternativeName>
        <fullName>NS1C</fullName>
    </alternativeName>
</protein>
<organismHost>
    <name type="scientific">Homo sapiens</name>
    <name type="common">Human</name>
    <dbReference type="NCBI Taxonomy" id="9606"/>
</organismHost>
<organismHost>
    <name type="scientific">Sus scrofa</name>
    <name type="common">Pig</name>
    <dbReference type="NCBI Taxonomy" id="9823"/>
</organismHost>
<sequence>VKSTNLMAFVATKMLERQEDLDTCTEMQVEKMKASTKARLRTESSFAPRTWEDAIKDGELLFNGTILQAESPTMTLASVEMKGKKSPIDFAPSNIAPIGQNPIYLSPCIPNFDGNVWEATMYHHRGATLTKTMNCNCFQRTIWCHPNPSRMRLSYAFVLYCRNTKKICGYLIARQVAGIETGIRKCFRCIKSGFVMATDEISLTILRSIKSGAQLDPYWGNETPDIDKTEAYMLSLREAGP</sequence>
<reference key="1">
    <citation type="journal article" date="1986" name="Virology">
        <title>Epidemiology of influenza C virus in man: multiple evolutionary lineages and low rate of change.</title>
        <authorList>
            <person name="Buonagurio D.A."/>
            <person name="Nakada S."/>
            <person name="Fitch W.M."/>
            <person name="Palese P."/>
        </authorList>
    </citation>
    <scope>NUCLEOTIDE SEQUENCE [GENOMIC RNA]</scope>
</reference>
<organism>
    <name type="scientific">Influenza C virus (strain C/Yamagata/10/1981)</name>
    <dbReference type="NCBI Taxonomy" id="11568"/>
    <lineage>
        <taxon>Viruses</taxon>
        <taxon>Riboviria</taxon>
        <taxon>Orthornavirae</taxon>
        <taxon>Negarnaviricota</taxon>
        <taxon>Polyploviricotina</taxon>
        <taxon>Insthoviricetes</taxon>
        <taxon>Articulavirales</taxon>
        <taxon>Orthomyxoviridae</taxon>
        <taxon>Gammainfluenzavirus</taxon>
        <taxon>Gammainfluenzavirus influenzae</taxon>
        <taxon>Influenza C virus</taxon>
    </lineage>
</organism>
<name>NS1_INCYA</name>
<dbReference type="EMBL" id="D00033">
    <property type="protein sequence ID" value="BAA24042.1"/>
    <property type="status" value="ALT_FRAME"/>
    <property type="molecule type" value="Genomic_RNA"/>
</dbReference>
<dbReference type="GO" id="GO:0030430">
    <property type="term" value="C:host cell cytoplasm"/>
    <property type="evidence" value="ECO:0007669"/>
    <property type="project" value="UniProtKB-SubCell"/>
</dbReference>
<dbReference type="GO" id="GO:0042025">
    <property type="term" value="C:host cell nucleus"/>
    <property type="evidence" value="ECO:0007669"/>
    <property type="project" value="UniProtKB-SubCell"/>
</dbReference>
<dbReference type="InterPro" id="IPR005187">
    <property type="entry name" value="Flu_C_NS1"/>
</dbReference>
<dbReference type="InterPro" id="IPR005188">
    <property type="entry name" value="Flu_C_NS2"/>
</dbReference>
<dbReference type="Pfam" id="PF03506">
    <property type="entry name" value="Flu_C_NS1"/>
    <property type="match status" value="1"/>
</dbReference>
<dbReference type="Pfam" id="PF03555">
    <property type="entry name" value="Flu_C_NS2"/>
    <property type="match status" value="1"/>
</dbReference>